<reference key="1">
    <citation type="submission" date="2008-04" db="EMBL/GenBank/DDBJ databases">
        <title>Complete sequence of chromosome of Natranaerobius thermophilus JW/NM-WN-LF.</title>
        <authorList>
            <consortium name="US DOE Joint Genome Institute"/>
            <person name="Copeland A."/>
            <person name="Lucas S."/>
            <person name="Lapidus A."/>
            <person name="Glavina del Rio T."/>
            <person name="Dalin E."/>
            <person name="Tice H."/>
            <person name="Bruce D."/>
            <person name="Goodwin L."/>
            <person name="Pitluck S."/>
            <person name="Chertkov O."/>
            <person name="Brettin T."/>
            <person name="Detter J.C."/>
            <person name="Han C."/>
            <person name="Kuske C.R."/>
            <person name="Schmutz J."/>
            <person name="Larimer F."/>
            <person name="Land M."/>
            <person name="Hauser L."/>
            <person name="Kyrpides N."/>
            <person name="Lykidis A."/>
            <person name="Mesbah N.M."/>
            <person name="Wiegel J."/>
        </authorList>
    </citation>
    <scope>NUCLEOTIDE SEQUENCE [LARGE SCALE GENOMIC DNA]</scope>
    <source>
        <strain>ATCC BAA-1301 / DSM 18059 / JW/NM-WN-LF</strain>
    </source>
</reference>
<accession>B2A4D8</accession>
<name>RS10_NATTJ</name>
<dbReference type="EMBL" id="CP001034">
    <property type="protein sequence ID" value="ACB83792.1"/>
    <property type="molecule type" value="Genomic_DNA"/>
</dbReference>
<dbReference type="RefSeq" id="WP_012446681.1">
    <property type="nucleotide sequence ID" value="NC_010718.1"/>
</dbReference>
<dbReference type="SMR" id="B2A4D8"/>
<dbReference type="FunCoup" id="B2A4D8">
    <property type="interactions" value="461"/>
</dbReference>
<dbReference type="STRING" id="457570.Nther_0193"/>
<dbReference type="KEGG" id="nth:Nther_0193"/>
<dbReference type="eggNOG" id="COG0051">
    <property type="taxonomic scope" value="Bacteria"/>
</dbReference>
<dbReference type="HOGENOM" id="CLU_122625_1_3_9"/>
<dbReference type="InParanoid" id="B2A4D8"/>
<dbReference type="OrthoDB" id="9804464at2"/>
<dbReference type="Proteomes" id="UP000001683">
    <property type="component" value="Chromosome"/>
</dbReference>
<dbReference type="GO" id="GO:1990904">
    <property type="term" value="C:ribonucleoprotein complex"/>
    <property type="evidence" value="ECO:0007669"/>
    <property type="project" value="UniProtKB-KW"/>
</dbReference>
<dbReference type="GO" id="GO:0005840">
    <property type="term" value="C:ribosome"/>
    <property type="evidence" value="ECO:0007669"/>
    <property type="project" value="UniProtKB-KW"/>
</dbReference>
<dbReference type="GO" id="GO:0003735">
    <property type="term" value="F:structural constituent of ribosome"/>
    <property type="evidence" value="ECO:0007669"/>
    <property type="project" value="InterPro"/>
</dbReference>
<dbReference type="GO" id="GO:0000049">
    <property type="term" value="F:tRNA binding"/>
    <property type="evidence" value="ECO:0007669"/>
    <property type="project" value="UniProtKB-UniRule"/>
</dbReference>
<dbReference type="GO" id="GO:0006412">
    <property type="term" value="P:translation"/>
    <property type="evidence" value="ECO:0007669"/>
    <property type="project" value="UniProtKB-UniRule"/>
</dbReference>
<dbReference type="FunFam" id="3.30.70.600:FF:000001">
    <property type="entry name" value="30S ribosomal protein S10"/>
    <property type="match status" value="1"/>
</dbReference>
<dbReference type="Gene3D" id="3.30.70.600">
    <property type="entry name" value="Ribosomal protein S10 domain"/>
    <property type="match status" value="1"/>
</dbReference>
<dbReference type="HAMAP" id="MF_00508">
    <property type="entry name" value="Ribosomal_uS10"/>
    <property type="match status" value="1"/>
</dbReference>
<dbReference type="InterPro" id="IPR001848">
    <property type="entry name" value="Ribosomal_uS10"/>
</dbReference>
<dbReference type="InterPro" id="IPR018268">
    <property type="entry name" value="Ribosomal_uS10_CS"/>
</dbReference>
<dbReference type="InterPro" id="IPR027486">
    <property type="entry name" value="Ribosomal_uS10_dom"/>
</dbReference>
<dbReference type="InterPro" id="IPR036838">
    <property type="entry name" value="Ribosomal_uS10_dom_sf"/>
</dbReference>
<dbReference type="NCBIfam" id="NF001861">
    <property type="entry name" value="PRK00596.1"/>
    <property type="match status" value="1"/>
</dbReference>
<dbReference type="NCBIfam" id="TIGR01049">
    <property type="entry name" value="rpsJ_bact"/>
    <property type="match status" value="1"/>
</dbReference>
<dbReference type="PANTHER" id="PTHR11700">
    <property type="entry name" value="30S RIBOSOMAL PROTEIN S10 FAMILY MEMBER"/>
    <property type="match status" value="1"/>
</dbReference>
<dbReference type="Pfam" id="PF00338">
    <property type="entry name" value="Ribosomal_S10"/>
    <property type="match status" value="1"/>
</dbReference>
<dbReference type="PRINTS" id="PR00971">
    <property type="entry name" value="RIBOSOMALS10"/>
</dbReference>
<dbReference type="SMART" id="SM01403">
    <property type="entry name" value="Ribosomal_S10"/>
    <property type="match status" value="1"/>
</dbReference>
<dbReference type="SUPFAM" id="SSF54999">
    <property type="entry name" value="Ribosomal protein S10"/>
    <property type="match status" value="1"/>
</dbReference>
<dbReference type="PROSITE" id="PS00361">
    <property type="entry name" value="RIBOSOMAL_S10"/>
    <property type="match status" value="1"/>
</dbReference>
<protein>
    <recommendedName>
        <fullName evidence="1">Small ribosomal subunit protein uS10</fullName>
    </recommendedName>
    <alternativeName>
        <fullName evidence="2">30S ribosomal protein S10</fullName>
    </alternativeName>
</protein>
<gene>
    <name evidence="1" type="primary">rpsJ</name>
    <name type="ordered locus">Nther_0193</name>
</gene>
<feature type="chain" id="PRO_1000127155" description="Small ribosomal subunit protein uS10">
    <location>
        <begin position="1"/>
        <end position="103"/>
    </location>
</feature>
<comment type="function">
    <text evidence="1">Involved in the binding of tRNA to the ribosomes.</text>
</comment>
<comment type="subunit">
    <text evidence="1">Part of the 30S ribosomal subunit.</text>
</comment>
<comment type="similarity">
    <text evidence="1">Belongs to the universal ribosomal protein uS10 family.</text>
</comment>
<proteinExistence type="inferred from homology"/>
<sequence>MANKQKIRIRLKAFDHMILDQSAEKIVETAKRTGANVSGPVPLPTDKNVYTVIRAPHKFKDSREQFEMRTHKRLIDILDPTSKTVDSLMRLDLPSGVDIEIKL</sequence>
<keyword id="KW-1185">Reference proteome</keyword>
<keyword id="KW-0687">Ribonucleoprotein</keyword>
<keyword id="KW-0689">Ribosomal protein</keyword>
<organism>
    <name type="scientific">Natranaerobius thermophilus (strain ATCC BAA-1301 / DSM 18059 / JW/NM-WN-LF)</name>
    <dbReference type="NCBI Taxonomy" id="457570"/>
    <lineage>
        <taxon>Bacteria</taxon>
        <taxon>Bacillati</taxon>
        <taxon>Bacillota</taxon>
        <taxon>Clostridia</taxon>
        <taxon>Natranaerobiales</taxon>
        <taxon>Natranaerobiaceae</taxon>
        <taxon>Natranaerobius</taxon>
    </lineage>
</organism>
<evidence type="ECO:0000255" key="1">
    <source>
        <dbReference type="HAMAP-Rule" id="MF_00508"/>
    </source>
</evidence>
<evidence type="ECO:0000305" key="2"/>